<dbReference type="EMBL" id="AB017071">
    <property type="protein sequence ID" value="BAB02297.1"/>
    <property type="molecule type" value="Genomic_DNA"/>
</dbReference>
<dbReference type="EMBL" id="CP002686">
    <property type="protein sequence ID" value="AEE75710.1"/>
    <property type="molecule type" value="Genomic_DNA"/>
</dbReference>
<dbReference type="EMBL" id="CP002686">
    <property type="protein sequence ID" value="AEE75711.1"/>
    <property type="molecule type" value="Genomic_DNA"/>
</dbReference>
<dbReference type="EMBL" id="BT006396">
    <property type="protein sequence ID" value="AAP21204.1"/>
    <property type="molecule type" value="mRNA"/>
</dbReference>
<dbReference type="EMBL" id="AK227628">
    <property type="protein sequence ID" value="BAE99619.1"/>
    <property type="molecule type" value="mRNA"/>
</dbReference>
<dbReference type="EMBL" id="AK317312">
    <property type="protein sequence ID" value="BAH19988.1"/>
    <property type="molecule type" value="mRNA"/>
</dbReference>
<dbReference type="EMBL" id="AY087154">
    <property type="protein sequence ID" value="AAM64712.1"/>
    <property type="molecule type" value="mRNA"/>
</dbReference>
<dbReference type="SMR" id="Q8LBK6"/>
<dbReference type="BioGRID" id="6143">
    <property type="interactions" value="20"/>
</dbReference>
<dbReference type="FunCoup" id="Q8LBK6">
    <property type="interactions" value="1721"/>
</dbReference>
<dbReference type="IntAct" id="Q8LBK6">
    <property type="interactions" value="15"/>
</dbReference>
<dbReference type="STRING" id="3702.Q8LBK6"/>
<dbReference type="MetOSite" id="Q8LBK6"/>
<dbReference type="PaxDb" id="3702-AT3G15660.1"/>
<dbReference type="ProteomicsDB" id="222276"/>
<dbReference type="EnsemblPlants" id="AT3G15660.1">
    <property type="protein sequence ID" value="AT3G15660.1"/>
    <property type="gene ID" value="AT3G15660"/>
</dbReference>
<dbReference type="EnsemblPlants" id="AT3G15660.2">
    <property type="protein sequence ID" value="AT3G15660.2"/>
    <property type="gene ID" value="AT3G15660"/>
</dbReference>
<dbReference type="Gramene" id="AT3G15660.1">
    <property type="protein sequence ID" value="AT3G15660.1"/>
    <property type="gene ID" value="AT3G15660"/>
</dbReference>
<dbReference type="Gramene" id="AT3G15660.2">
    <property type="protein sequence ID" value="AT3G15660.2"/>
    <property type="gene ID" value="AT3G15660"/>
</dbReference>
<dbReference type="KEGG" id="ath:AT3G15660"/>
<dbReference type="Araport" id="AT3G15660"/>
<dbReference type="TAIR" id="AT3G15660">
    <property type="gene designation" value="GRX4"/>
</dbReference>
<dbReference type="eggNOG" id="KOG0911">
    <property type="taxonomic scope" value="Eukaryota"/>
</dbReference>
<dbReference type="HOGENOM" id="CLU_026126_3_3_1"/>
<dbReference type="InParanoid" id="Q8LBK6"/>
<dbReference type="OMA" id="CAFSKRM"/>
<dbReference type="OrthoDB" id="415696at2759"/>
<dbReference type="PhylomeDB" id="Q8LBK6"/>
<dbReference type="CD-CODE" id="4299E36E">
    <property type="entry name" value="Nucleolus"/>
</dbReference>
<dbReference type="PRO" id="PR:Q8LBK6"/>
<dbReference type="Proteomes" id="UP000006548">
    <property type="component" value="Chromosome 3"/>
</dbReference>
<dbReference type="ExpressionAtlas" id="Q8LBK6">
    <property type="expression patterns" value="baseline and differential"/>
</dbReference>
<dbReference type="GO" id="GO:0005829">
    <property type="term" value="C:cytosol"/>
    <property type="evidence" value="ECO:0007005"/>
    <property type="project" value="TAIR"/>
</dbReference>
<dbReference type="GO" id="GO:0005739">
    <property type="term" value="C:mitochondrion"/>
    <property type="evidence" value="ECO:0000314"/>
    <property type="project" value="TAIR"/>
</dbReference>
<dbReference type="GO" id="GO:0051537">
    <property type="term" value="F:2 iron, 2 sulfur cluster binding"/>
    <property type="evidence" value="ECO:0000314"/>
    <property type="project" value="TAIR"/>
</dbReference>
<dbReference type="GO" id="GO:0015036">
    <property type="term" value="F:disulfide oxidoreductase activity"/>
    <property type="evidence" value="ECO:0000316"/>
    <property type="project" value="TAIR"/>
</dbReference>
<dbReference type="GO" id="GO:0046872">
    <property type="term" value="F:metal ion binding"/>
    <property type="evidence" value="ECO:0000314"/>
    <property type="project" value="TAIR"/>
</dbReference>
<dbReference type="GO" id="GO:0009249">
    <property type="term" value="P:protein lipoylation"/>
    <property type="evidence" value="ECO:0000315"/>
    <property type="project" value="TAIR"/>
</dbReference>
<dbReference type="CDD" id="cd03028">
    <property type="entry name" value="GRX_PICOT_like"/>
    <property type="match status" value="1"/>
</dbReference>
<dbReference type="FunFam" id="3.40.30.10:FF:000005">
    <property type="entry name" value="Glutaredoxin 5"/>
    <property type="match status" value="1"/>
</dbReference>
<dbReference type="Gene3D" id="3.40.30.10">
    <property type="entry name" value="Glutaredoxin"/>
    <property type="match status" value="1"/>
</dbReference>
<dbReference type="InterPro" id="IPR002109">
    <property type="entry name" value="Glutaredoxin"/>
</dbReference>
<dbReference type="InterPro" id="IPR033658">
    <property type="entry name" value="GRX_PICOT-like"/>
</dbReference>
<dbReference type="InterPro" id="IPR004480">
    <property type="entry name" value="Monothiol_GRX-rel"/>
</dbReference>
<dbReference type="InterPro" id="IPR036249">
    <property type="entry name" value="Thioredoxin-like_sf"/>
</dbReference>
<dbReference type="NCBIfam" id="TIGR00365">
    <property type="entry name" value="Grx4 family monothiol glutaredoxin"/>
    <property type="match status" value="1"/>
</dbReference>
<dbReference type="PANTHER" id="PTHR10293">
    <property type="entry name" value="GLUTAREDOXIN FAMILY MEMBER"/>
    <property type="match status" value="1"/>
</dbReference>
<dbReference type="PANTHER" id="PTHR10293:SF16">
    <property type="entry name" value="GLUTAREDOXIN-RELATED PROTEIN 5, MITOCHONDRIAL"/>
    <property type="match status" value="1"/>
</dbReference>
<dbReference type="Pfam" id="PF00462">
    <property type="entry name" value="Glutaredoxin"/>
    <property type="match status" value="1"/>
</dbReference>
<dbReference type="SUPFAM" id="SSF52833">
    <property type="entry name" value="Thioredoxin-like"/>
    <property type="match status" value="1"/>
</dbReference>
<dbReference type="PROSITE" id="PS51354">
    <property type="entry name" value="GLUTAREDOXIN_2"/>
    <property type="match status" value="1"/>
</dbReference>
<accession>Q8LBK6</accession>
<accession>B9DGX1</accession>
<accession>Q9LW13</accession>
<comment type="function">
    <text evidence="9">May only reduce GSH-thiol disulfides, but not protein disulfides. Participates probably to the maturation of iron-sulfur proteins and to the regulation of the redox state of the BOLA proteins.</text>
</comment>
<comment type="subunit">
    <text evidence="2 7">[2Fe-2S]-bridged holo-homodimer (By similarity). Interacts in vitro with SUFE1, BOLA1, BOLA2 and BOLA4 (PubMed:24203231). Interacts in vivo only with BOLA4 (PubMed:24203231).</text>
</comment>
<comment type="interaction">
    <interactant intactId="EBI-4427398">
        <id>Q8LBK6</id>
    </interactant>
    <interactant intactId="EBI-4426649">
        <id>Q17TI5</id>
        <label>BRX</label>
    </interactant>
    <organismsDiffer>false</organismsDiffer>
    <experiments>3</experiments>
</comment>
<comment type="interaction">
    <interactant intactId="EBI-4427398">
        <id>Q8LBK6</id>
    </interactant>
    <interactant intactId="EBI-2292496">
        <id>Q8GTS1</id>
        <label>BZIP24</label>
    </interactant>
    <organismsDiffer>false</organismsDiffer>
    <experiments>2</experiments>
</comment>
<comment type="subcellular location">
    <subcellularLocation>
        <location evidence="6">Mitochondrion</location>
    </subcellularLocation>
</comment>
<comment type="similarity">
    <text evidence="9">Belongs to the glutaredoxin family. CGFS subfamily.</text>
</comment>
<gene>
    <name evidence="8" type="primary">GRXS15</name>
    <name evidence="10" type="ordered locus">At3g15660</name>
    <name evidence="11" type="ORF">MSJ11.6</name>
</gene>
<reference key="1">
    <citation type="journal article" date="2000" name="DNA Res.">
        <title>Structural analysis of Arabidopsis thaliana chromosome 3. I. Sequence features of the regions of 4,504,864 bp covered by sixty P1 and TAC clones.</title>
        <authorList>
            <person name="Sato S."/>
            <person name="Nakamura Y."/>
            <person name="Kaneko T."/>
            <person name="Katoh T."/>
            <person name="Asamizu E."/>
            <person name="Tabata S."/>
        </authorList>
    </citation>
    <scope>NUCLEOTIDE SEQUENCE [LARGE SCALE GENOMIC DNA]</scope>
    <source>
        <strain>cv. Columbia</strain>
    </source>
</reference>
<reference key="2">
    <citation type="journal article" date="2017" name="Plant J.">
        <title>Araport11: a complete reannotation of the Arabidopsis thaliana reference genome.</title>
        <authorList>
            <person name="Cheng C.Y."/>
            <person name="Krishnakumar V."/>
            <person name="Chan A.P."/>
            <person name="Thibaud-Nissen F."/>
            <person name="Schobel S."/>
            <person name="Town C.D."/>
        </authorList>
    </citation>
    <scope>GENOME REANNOTATION</scope>
    <source>
        <strain>cv. Columbia</strain>
    </source>
</reference>
<reference key="3">
    <citation type="journal article" date="2003" name="Science">
        <title>Empirical analysis of transcriptional activity in the Arabidopsis genome.</title>
        <authorList>
            <person name="Yamada K."/>
            <person name="Lim J."/>
            <person name="Dale J.M."/>
            <person name="Chen H."/>
            <person name="Shinn P."/>
            <person name="Palm C.J."/>
            <person name="Southwick A.M."/>
            <person name="Wu H.C."/>
            <person name="Kim C.J."/>
            <person name="Nguyen M."/>
            <person name="Pham P.K."/>
            <person name="Cheuk R.F."/>
            <person name="Karlin-Newmann G."/>
            <person name="Liu S.X."/>
            <person name="Lam B."/>
            <person name="Sakano H."/>
            <person name="Wu T."/>
            <person name="Yu G."/>
            <person name="Miranda M."/>
            <person name="Quach H.L."/>
            <person name="Tripp M."/>
            <person name="Chang C.H."/>
            <person name="Lee J.M."/>
            <person name="Toriumi M.J."/>
            <person name="Chan M.M."/>
            <person name="Tang C.C."/>
            <person name="Onodera C.S."/>
            <person name="Deng J.M."/>
            <person name="Akiyama K."/>
            <person name="Ansari Y."/>
            <person name="Arakawa T."/>
            <person name="Banh J."/>
            <person name="Banno F."/>
            <person name="Bowser L."/>
            <person name="Brooks S.Y."/>
            <person name="Carninci P."/>
            <person name="Chao Q."/>
            <person name="Choy N."/>
            <person name="Enju A."/>
            <person name="Goldsmith A.D."/>
            <person name="Gurjal M."/>
            <person name="Hansen N.F."/>
            <person name="Hayashizaki Y."/>
            <person name="Johnson-Hopson C."/>
            <person name="Hsuan V.W."/>
            <person name="Iida K."/>
            <person name="Karnes M."/>
            <person name="Khan S."/>
            <person name="Koesema E."/>
            <person name="Ishida J."/>
            <person name="Jiang P.X."/>
            <person name="Jones T."/>
            <person name="Kawai J."/>
            <person name="Kamiya A."/>
            <person name="Meyers C."/>
            <person name="Nakajima M."/>
            <person name="Narusaka M."/>
            <person name="Seki M."/>
            <person name="Sakurai T."/>
            <person name="Satou M."/>
            <person name="Tamse R."/>
            <person name="Vaysberg M."/>
            <person name="Wallender E.K."/>
            <person name="Wong C."/>
            <person name="Yamamura Y."/>
            <person name="Yuan S."/>
            <person name="Shinozaki K."/>
            <person name="Davis R.W."/>
            <person name="Theologis A."/>
            <person name="Ecker J.R."/>
        </authorList>
    </citation>
    <scope>NUCLEOTIDE SEQUENCE [LARGE SCALE MRNA]</scope>
    <source>
        <strain>cv. Columbia</strain>
    </source>
</reference>
<reference key="4">
    <citation type="submission" date="2006-07" db="EMBL/GenBank/DDBJ databases">
        <title>Large-scale analysis of RIKEN Arabidopsis full-length (RAFL) cDNAs.</title>
        <authorList>
            <person name="Totoki Y."/>
            <person name="Seki M."/>
            <person name="Ishida J."/>
            <person name="Nakajima M."/>
            <person name="Enju A."/>
            <person name="Kamiya A."/>
            <person name="Narusaka M."/>
            <person name="Shin-i T."/>
            <person name="Nakagawa M."/>
            <person name="Sakamoto N."/>
            <person name="Oishi K."/>
            <person name="Kohara Y."/>
            <person name="Kobayashi M."/>
            <person name="Toyoda A."/>
            <person name="Sakaki Y."/>
            <person name="Sakurai T."/>
            <person name="Iida K."/>
            <person name="Akiyama K."/>
            <person name="Satou M."/>
            <person name="Toyoda T."/>
            <person name="Konagaya A."/>
            <person name="Carninci P."/>
            <person name="Kawai J."/>
            <person name="Hayashizaki Y."/>
            <person name="Shinozaki K."/>
        </authorList>
    </citation>
    <scope>NUCLEOTIDE SEQUENCE [LARGE SCALE MRNA]</scope>
    <source>
        <strain>cv. Columbia</strain>
    </source>
</reference>
<reference key="5">
    <citation type="journal article" date="2009" name="DNA Res.">
        <title>Analysis of multiple occurrences of alternative splicing events in Arabidopsis thaliana using novel sequenced full-length cDNAs.</title>
        <authorList>
            <person name="Iida K."/>
            <person name="Fukami-Kobayashi K."/>
            <person name="Toyoda A."/>
            <person name="Sakaki Y."/>
            <person name="Kobayashi M."/>
            <person name="Seki M."/>
            <person name="Shinozaki K."/>
        </authorList>
    </citation>
    <scope>NUCLEOTIDE SEQUENCE [LARGE SCALE MRNA]</scope>
    <source>
        <strain>cv. Columbia</strain>
    </source>
</reference>
<reference key="6">
    <citation type="submission" date="2002-03" db="EMBL/GenBank/DDBJ databases">
        <title>Full-length cDNA from Arabidopsis thaliana.</title>
        <authorList>
            <person name="Brover V.V."/>
            <person name="Troukhan M.E."/>
            <person name="Alexandrov N.A."/>
            <person name="Lu Y.-P."/>
            <person name="Flavell R.B."/>
            <person name="Feldmann K.A."/>
        </authorList>
    </citation>
    <scope>NUCLEOTIDE SEQUENCE [LARGE SCALE MRNA]</scope>
</reference>
<reference key="7">
    <citation type="journal article" date="2003" name="J. Biol. Chem.">
        <title>Molecular definition of the ascorbate-glutathione cycle in Arabidopsis mitochondria reveals dual targeting of antioxidant defenses in plants.</title>
        <authorList>
            <person name="Chew O."/>
            <person name="Whelan J."/>
            <person name="Millar A.H."/>
        </authorList>
    </citation>
    <scope>IDENTIFICATION BY MASS SPECTROMETRY</scope>
    <scope>SUBCELLULAR LOCATION</scope>
</reference>
<reference key="8">
    <citation type="journal article" date="2004" name="Cell. Mol. Life Sci.">
        <title>Plant glutaredoxins: still mysterious reducing systems.</title>
        <authorList>
            <person name="Rouhier N."/>
            <person name="Gelhaye E."/>
            <person name="Jacquot J.-P."/>
        </authorList>
    </citation>
    <scope>GENE FAMILY</scope>
    <scope>NOMENCLATURE</scope>
</reference>
<reference key="9">
    <citation type="journal article" date="2006" name="J. Exp. Bot.">
        <title>Genome-wide analysis of plant glutaredoxin systems.</title>
        <authorList>
            <person name="Rouhier N."/>
            <person name="Couturier J."/>
            <person name="Jacquot J.-P."/>
        </authorList>
    </citation>
    <scope>GENE FAMILY</scope>
</reference>
<reference key="10">
    <citation type="journal article" date="2014" name="Mol. Plant">
        <title>Monothiol glutaredoxin-BolA interactions: redox control of Arabidopsis thaliana BolA2 and SufE1.</title>
        <authorList>
            <person name="Couturier J."/>
            <person name="Wu H.C."/>
            <person name="Dhalleine T."/>
            <person name="Pegeot H."/>
            <person name="Sudre D."/>
            <person name="Gualberto J.M."/>
            <person name="Jacquot J.P."/>
            <person name="Gaymard F."/>
            <person name="Vignols F."/>
            <person name="Rouhier N."/>
        </authorList>
    </citation>
    <scope>INTERACTION WITH SUFE1; BOLA1; BOLA2 AND BOLA4</scope>
</reference>
<sequence>MAASLSSRLIKGIANLKAVRSSRLTSASVYQNGMMRFSSTVPSDSDTHDDFKPTQKVPPDSTDSLKDIVENDVKDNPVMIYMKGVPESPQCGFSSLAVRVLQQYNVPISSRNILEDQELKNAVKSFSHWPTFPQIFIKGEFIGGSDIILNMHKEGELEQKLKDVSGNQD</sequence>
<feature type="transit peptide" description="Mitochondrion" evidence="3">
    <location>
        <begin position="1"/>
        <end position="37"/>
    </location>
</feature>
<feature type="chain" id="PRO_0000268735" description="Monothiol glutaredoxin-S15, mitochondrial">
    <location>
        <begin position="38"/>
        <end position="169"/>
    </location>
</feature>
<feature type="domain" description="Glutaredoxin" evidence="4">
    <location>
        <begin position="66"/>
        <end position="168"/>
    </location>
</feature>
<feature type="region of interest" description="Disordered" evidence="5">
    <location>
        <begin position="38"/>
        <end position="61"/>
    </location>
</feature>
<feature type="binding site" evidence="1">
    <location>
        <position position="83"/>
    </location>
    <ligand>
        <name>glutathione</name>
        <dbReference type="ChEBI" id="CHEBI:57925"/>
    </ligand>
</feature>
<feature type="binding site" evidence="1">
    <location>
        <position position="91"/>
    </location>
    <ligand>
        <name>[2Fe-2S] cluster</name>
        <dbReference type="ChEBI" id="CHEBI:190135"/>
        <note>ligand shared between dimeric partners</note>
    </ligand>
</feature>
<feature type="binding site" evidence="3">
    <location>
        <position position="120"/>
    </location>
    <ligand>
        <name>glutathione</name>
        <dbReference type="ChEBI" id="CHEBI:57925"/>
    </ligand>
</feature>
<feature type="binding site" evidence="1">
    <location>
        <position position="132"/>
    </location>
    <ligand>
        <name>glutathione</name>
        <dbReference type="ChEBI" id="CHEBI:57925"/>
    </ligand>
</feature>
<feature type="binding site" evidence="1">
    <location>
        <begin position="145"/>
        <end position="146"/>
    </location>
    <ligand>
        <name>glutathione</name>
        <dbReference type="ChEBI" id="CHEBI:57925"/>
    </ligand>
</feature>
<feature type="sequence conflict" description="In Ref. 6; AAM64712." evidence="9" ref="6">
    <original>V</original>
    <variation>I</variation>
    <location>
        <position position="100"/>
    </location>
</feature>
<organism>
    <name type="scientific">Arabidopsis thaliana</name>
    <name type="common">Mouse-ear cress</name>
    <dbReference type="NCBI Taxonomy" id="3702"/>
    <lineage>
        <taxon>Eukaryota</taxon>
        <taxon>Viridiplantae</taxon>
        <taxon>Streptophyta</taxon>
        <taxon>Embryophyta</taxon>
        <taxon>Tracheophyta</taxon>
        <taxon>Spermatophyta</taxon>
        <taxon>Magnoliopsida</taxon>
        <taxon>eudicotyledons</taxon>
        <taxon>Gunneridae</taxon>
        <taxon>Pentapetalae</taxon>
        <taxon>rosids</taxon>
        <taxon>malvids</taxon>
        <taxon>Brassicales</taxon>
        <taxon>Brassicaceae</taxon>
        <taxon>Camelineae</taxon>
        <taxon>Arabidopsis</taxon>
    </lineage>
</organism>
<proteinExistence type="evidence at protein level"/>
<evidence type="ECO:0000250" key="1">
    <source>
        <dbReference type="UniProtKB" id="P0AC69"/>
    </source>
</evidence>
<evidence type="ECO:0000250" key="2">
    <source>
        <dbReference type="UniProtKB" id="Q03835"/>
    </source>
</evidence>
<evidence type="ECO:0000255" key="3"/>
<evidence type="ECO:0000255" key="4">
    <source>
        <dbReference type="PROSITE-ProRule" id="PRU00686"/>
    </source>
</evidence>
<evidence type="ECO:0000256" key="5">
    <source>
        <dbReference type="SAM" id="MobiDB-lite"/>
    </source>
</evidence>
<evidence type="ECO:0000269" key="6">
    <source>
    </source>
</evidence>
<evidence type="ECO:0000269" key="7">
    <source>
    </source>
</evidence>
<evidence type="ECO:0000303" key="8">
    <source>
    </source>
</evidence>
<evidence type="ECO:0000305" key="9"/>
<evidence type="ECO:0000312" key="10">
    <source>
        <dbReference type="Araport" id="AT3G15660"/>
    </source>
</evidence>
<evidence type="ECO:0000312" key="11">
    <source>
        <dbReference type="EMBL" id="BAB02297.1"/>
    </source>
</evidence>
<name>GRS15_ARATH</name>
<keyword id="KW-0001">2Fe-2S</keyword>
<keyword id="KW-0408">Iron</keyword>
<keyword id="KW-0411">Iron-sulfur</keyword>
<keyword id="KW-0479">Metal-binding</keyword>
<keyword id="KW-0496">Mitochondrion</keyword>
<keyword id="KW-0676">Redox-active center</keyword>
<keyword id="KW-1185">Reference proteome</keyword>
<keyword id="KW-0809">Transit peptide</keyword>
<protein>
    <recommendedName>
        <fullName evidence="8">Monothiol glutaredoxin-S15, mitochondrial</fullName>
        <shortName evidence="8">AtGrxS15</shortName>
    </recommendedName>
</protein>